<dbReference type="EMBL" id="AE014297">
    <property type="protein sequence ID" value="AAF55978.1"/>
    <property type="molecule type" value="Genomic_DNA"/>
</dbReference>
<dbReference type="EMBL" id="AY119241">
    <property type="protein sequence ID" value="AAM51101.1"/>
    <property type="molecule type" value="mRNA"/>
</dbReference>
<dbReference type="RefSeq" id="NP_001247237.1">
    <property type="nucleotide sequence ID" value="NM_001260308.1"/>
</dbReference>
<dbReference type="RefSeq" id="NP_651029.1">
    <property type="nucleotide sequence ID" value="NM_142772.1"/>
</dbReference>
<dbReference type="SMR" id="Q9VD25"/>
<dbReference type="BioGRID" id="67577">
    <property type="interactions" value="23"/>
</dbReference>
<dbReference type="ComplexPortal" id="CPX-2628">
    <property type="entry name" value="DNA-directed RNA polymerase III complex"/>
</dbReference>
<dbReference type="DIP" id="DIP-17810N"/>
<dbReference type="FunCoup" id="Q9VD25">
    <property type="interactions" value="1760"/>
</dbReference>
<dbReference type="IntAct" id="Q9VD25">
    <property type="interactions" value="18"/>
</dbReference>
<dbReference type="STRING" id="7227.FBpp0293863"/>
<dbReference type="PaxDb" id="7227-FBpp0293863"/>
<dbReference type="DNASU" id="42619"/>
<dbReference type="EnsemblMetazoa" id="FBtr0084236">
    <property type="protein sequence ID" value="FBpp0083629"/>
    <property type="gene ID" value="FBgn0038951"/>
</dbReference>
<dbReference type="EnsemblMetazoa" id="FBtr0305320">
    <property type="protein sequence ID" value="FBpp0293863"/>
    <property type="gene ID" value="FBgn0038951"/>
</dbReference>
<dbReference type="GeneID" id="42619"/>
<dbReference type="KEGG" id="dme:Dmel_CG5380"/>
<dbReference type="UCSC" id="CG5380-RA">
    <property type="organism name" value="d. melanogaster"/>
</dbReference>
<dbReference type="AGR" id="FB:FBgn0038951"/>
<dbReference type="CTD" id="10621"/>
<dbReference type="FlyBase" id="FBgn0038951">
    <property type="gene designation" value="Polr3F"/>
</dbReference>
<dbReference type="VEuPathDB" id="VectorBase:FBgn0038951"/>
<dbReference type="eggNOG" id="KOG3233">
    <property type="taxonomic scope" value="Eukaryota"/>
</dbReference>
<dbReference type="GeneTree" id="ENSGT00390000009679"/>
<dbReference type="HOGENOM" id="CLU_033661_1_0_1"/>
<dbReference type="InParanoid" id="Q9VD25"/>
<dbReference type="OMA" id="VGTTKKC"/>
<dbReference type="OrthoDB" id="613763at2759"/>
<dbReference type="PhylomeDB" id="Q9VD25"/>
<dbReference type="Reactome" id="R-DME-76061">
    <property type="pathway name" value="RNA Polymerase III Transcription Initiation From Type 1 Promoter"/>
</dbReference>
<dbReference type="Reactome" id="R-DME-76066">
    <property type="pathway name" value="RNA Polymerase III Transcription Initiation From Type 2 Promoter"/>
</dbReference>
<dbReference type="BioGRID-ORCS" id="42619">
    <property type="hits" value="0 hits in 1 CRISPR screen"/>
</dbReference>
<dbReference type="GenomeRNAi" id="42619"/>
<dbReference type="PRO" id="PR:Q9VD25"/>
<dbReference type="Proteomes" id="UP000000803">
    <property type="component" value="Chromosome 3R"/>
</dbReference>
<dbReference type="Bgee" id="FBgn0038951">
    <property type="expression patterns" value="Expressed in sugar-sensing neuron of the adult brain in brain and 47 other cell types or tissues"/>
</dbReference>
<dbReference type="ExpressionAtlas" id="Q9VD25">
    <property type="expression patterns" value="baseline and differential"/>
</dbReference>
<dbReference type="GO" id="GO:0005666">
    <property type="term" value="C:RNA polymerase III complex"/>
    <property type="evidence" value="ECO:0000318"/>
    <property type="project" value="GO_Central"/>
</dbReference>
<dbReference type="GO" id="GO:0006383">
    <property type="term" value="P:transcription by RNA polymerase III"/>
    <property type="evidence" value="ECO:0007669"/>
    <property type="project" value="InterPro"/>
</dbReference>
<dbReference type="FunFam" id="1.10.10.10:FF:000116">
    <property type="entry name" value="DNA-directed RNA polymerase III subunit RPC6"/>
    <property type="match status" value="1"/>
</dbReference>
<dbReference type="FunFam" id="1.10.10.10:FF:000237">
    <property type="entry name" value="DNA-directed RNA polymerase III subunit RPC6"/>
    <property type="match status" value="1"/>
</dbReference>
<dbReference type="Gene3D" id="1.10.10.10">
    <property type="entry name" value="Winged helix-like DNA-binding domain superfamily/Winged helix DNA-binding domain"/>
    <property type="match status" value="2"/>
</dbReference>
<dbReference type="InterPro" id="IPR007832">
    <property type="entry name" value="RNA_pol_Rpc34"/>
</dbReference>
<dbReference type="InterPro" id="IPR016049">
    <property type="entry name" value="RNA_pol_Rpc34-like"/>
</dbReference>
<dbReference type="InterPro" id="IPR036388">
    <property type="entry name" value="WH-like_DNA-bd_sf"/>
</dbReference>
<dbReference type="InterPro" id="IPR036390">
    <property type="entry name" value="WH_DNA-bd_sf"/>
</dbReference>
<dbReference type="PANTHER" id="PTHR12780">
    <property type="entry name" value="RNA POLYMERASE III DNA DIRECTED , 39KD SUBUNIT-RELATED"/>
    <property type="match status" value="1"/>
</dbReference>
<dbReference type="Pfam" id="PF05158">
    <property type="entry name" value="RNA_pol_Rpc34"/>
    <property type="match status" value="1"/>
</dbReference>
<dbReference type="PIRSF" id="PIRSF028763">
    <property type="entry name" value="RNA_pol_Rpc34"/>
    <property type="match status" value="1"/>
</dbReference>
<dbReference type="SUPFAM" id="SSF46785">
    <property type="entry name" value="Winged helix' DNA-binding domain"/>
    <property type="match status" value="2"/>
</dbReference>
<gene>
    <name evidence="3" type="primary">Polr3F</name>
    <name evidence="3" type="ORF">CG5380</name>
</gene>
<protein>
    <recommendedName>
        <fullName evidence="2">DNA-directed RNA polymerase III subunit RPC6</fullName>
        <shortName evidence="3">DNA-directed RNA polymerase III subunit F</shortName>
        <shortName evidence="2">RNA polymerase III subunit C6</shortName>
    </recommendedName>
</protein>
<comment type="function">
    <text evidence="1">DNA-dependent RNA polymerase catalyzes the transcription of DNA into RNA using the four ribonucleoside triphosphates as substrates. Specific peripheric component of RNA polymerase III which synthesizes small RNAs, such as 5S rRNA and tRNAs (By similarity).</text>
</comment>
<comment type="subunit">
    <text evidence="1">Component of the RNA polymerase III (Pol III) complex consisting of 17 subunits.</text>
</comment>
<comment type="subcellular location">
    <subcellularLocation>
        <location evidence="1">Nucleus</location>
    </subcellularLocation>
</comment>
<comment type="similarity">
    <text evidence="2">Belongs to the eukaryotic RPC34/RPC39 RNA polymerase subunit family.</text>
</comment>
<accession>Q9VD25</accession>
<accession>Q540W8</accession>
<feature type="chain" id="PRO_0000073975" description="DNA-directed RNA polymerase III subunit RPC6">
    <location>
        <begin position="1"/>
        <end position="293"/>
    </location>
</feature>
<sequence length="293" mass="32602">MATEVSQLLLAVVQGIPAGATNDDLTKALPDVPAATRVEALNILLQEGGIEILKKGEKLVYRAKDPEKKSALPKDADNEEKVVYGIVEEGGNKGIWIRDIRMKSNLNMIQLNKILKNLETKKLIKAVKSVNASKKKVYMLYNLEPDLSITGGAWYQDQDFEVEFVDVLNQQCLRFLQMKRDSAEKKREGPLAFKQMSCCTVNEVQKFISDLGISKVNLAEADLETILKTVVYDGNAERVRQQDGSFVYRAVNAPLPPTGLVQMPCGICPVIKNCSNCGDVTAITCEYMRDWLD</sequence>
<proteinExistence type="evidence at transcript level"/>
<keyword id="KW-0240">DNA-directed RNA polymerase</keyword>
<keyword id="KW-0539">Nucleus</keyword>
<keyword id="KW-1185">Reference proteome</keyword>
<keyword id="KW-0804">Transcription</keyword>
<name>RPC6_DROME</name>
<reference key="1">
    <citation type="journal article" date="2000" name="Science">
        <title>The genome sequence of Drosophila melanogaster.</title>
        <authorList>
            <person name="Adams M.D."/>
            <person name="Celniker S.E."/>
            <person name="Holt R.A."/>
            <person name="Evans C.A."/>
            <person name="Gocayne J.D."/>
            <person name="Amanatides P.G."/>
            <person name="Scherer S.E."/>
            <person name="Li P.W."/>
            <person name="Hoskins R.A."/>
            <person name="Galle R.F."/>
            <person name="George R.A."/>
            <person name="Lewis S.E."/>
            <person name="Richards S."/>
            <person name="Ashburner M."/>
            <person name="Henderson S.N."/>
            <person name="Sutton G.G."/>
            <person name="Wortman J.R."/>
            <person name="Yandell M.D."/>
            <person name="Zhang Q."/>
            <person name="Chen L.X."/>
            <person name="Brandon R.C."/>
            <person name="Rogers Y.-H.C."/>
            <person name="Blazej R.G."/>
            <person name="Champe M."/>
            <person name="Pfeiffer B.D."/>
            <person name="Wan K.H."/>
            <person name="Doyle C."/>
            <person name="Baxter E.G."/>
            <person name="Helt G."/>
            <person name="Nelson C.R."/>
            <person name="Miklos G.L.G."/>
            <person name="Abril J.F."/>
            <person name="Agbayani A."/>
            <person name="An H.-J."/>
            <person name="Andrews-Pfannkoch C."/>
            <person name="Baldwin D."/>
            <person name="Ballew R.M."/>
            <person name="Basu A."/>
            <person name="Baxendale J."/>
            <person name="Bayraktaroglu L."/>
            <person name="Beasley E.M."/>
            <person name="Beeson K.Y."/>
            <person name="Benos P.V."/>
            <person name="Berman B.P."/>
            <person name="Bhandari D."/>
            <person name="Bolshakov S."/>
            <person name="Borkova D."/>
            <person name="Botchan M.R."/>
            <person name="Bouck J."/>
            <person name="Brokstein P."/>
            <person name="Brottier P."/>
            <person name="Burtis K.C."/>
            <person name="Busam D.A."/>
            <person name="Butler H."/>
            <person name="Cadieu E."/>
            <person name="Center A."/>
            <person name="Chandra I."/>
            <person name="Cherry J.M."/>
            <person name="Cawley S."/>
            <person name="Dahlke C."/>
            <person name="Davenport L.B."/>
            <person name="Davies P."/>
            <person name="de Pablos B."/>
            <person name="Delcher A."/>
            <person name="Deng Z."/>
            <person name="Mays A.D."/>
            <person name="Dew I."/>
            <person name="Dietz S.M."/>
            <person name="Dodson K."/>
            <person name="Doup L.E."/>
            <person name="Downes M."/>
            <person name="Dugan-Rocha S."/>
            <person name="Dunkov B.C."/>
            <person name="Dunn P."/>
            <person name="Durbin K.J."/>
            <person name="Evangelista C.C."/>
            <person name="Ferraz C."/>
            <person name="Ferriera S."/>
            <person name="Fleischmann W."/>
            <person name="Fosler C."/>
            <person name="Gabrielian A.E."/>
            <person name="Garg N.S."/>
            <person name="Gelbart W.M."/>
            <person name="Glasser K."/>
            <person name="Glodek A."/>
            <person name="Gong F."/>
            <person name="Gorrell J.H."/>
            <person name="Gu Z."/>
            <person name="Guan P."/>
            <person name="Harris M."/>
            <person name="Harris N.L."/>
            <person name="Harvey D.A."/>
            <person name="Heiman T.J."/>
            <person name="Hernandez J.R."/>
            <person name="Houck J."/>
            <person name="Hostin D."/>
            <person name="Houston K.A."/>
            <person name="Howland T.J."/>
            <person name="Wei M.-H."/>
            <person name="Ibegwam C."/>
            <person name="Jalali M."/>
            <person name="Kalush F."/>
            <person name="Karpen G.H."/>
            <person name="Ke Z."/>
            <person name="Kennison J.A."/>
            <person name="Ketchum K.A."/>
            <person name="Kimmel B.E."/>
            <person name="Kodira C.D."/>
            <person name="Kraft C.L."/>
            <person name="Kravitz S."/>
            <person name="Kulp D."/>
            <person name="Lai Z."/>
            <person name="Lasko P."/>
            <person name="Lei Y."/>
            <person name="Levitsky A.A."/>
            <person name="Li J.H."/>
            <person name="Li Z."/>
            <person name="Liang Y."/>
            <person name="Lin X."/>
            <person name="Liu X."/>
            <person name="Mattei B."/>
            <person name="McIntosh T.C."/>
            <person name="McLeod M.P."/>
            <person name="McPherson D."/>
            <person name="Merkulov G."/>
            <person name="Milshina N.V."/>
            <person name="Mobarry C."/>
            <person name="Morris J."/>
            <person name="Moshrefi A."/>
            <person name="Mount S.M."/>
            <person name="Moy M."/>
            <person name="Murphy B."/>
            <person name="Murphy L."/>
            <person name="Muzny D.M."/>
            <person name="Nelson D.L."/>
            <person name="Nelson D.R."/>
            <person name="Nelson K.A."/>
            <person name="Nixon K."/>
            <person name="Nusskern D.R."/>
            <person name="Pacleb J.M."/>
            <person name="Palazzolo M."/>
            <person name="Pittman G.S."/>
            <person name="Pan S."/>
            <person name="Pollard J."/>
            <person name="Puri V."/>
            <person name="Reese M.G."/>
            <person name="Reinert K."/>
            <person name="Remington K."/>
            <person name="Saunders R.D.C."/>
            <person name="Scheeler F."/>
            <person name="Shen H."/>
            <person name="Shue B.C."/>
            <person name="Siden-Kiamos I."/>
            <person name="Simpson M."/>
            <person name="Skupski M.P."/>
            <person name="Smith T.J."/>
            <person name="Spier E."/>
            <person name="Spradling A.C."/>
            <person name="Stapleton M."/>
            <person name="Strong R."/>
            <person name="Sun E."/>
            <person name="Svirskas R."/>
            <person name="Tector C."/>
            <person name="Turner R."/>
            <person name="Venter E."/>
            <person name="Wang A.H."/>
            <person name="Wang X."/>
            <person name="Wang Z.-Y."/>
            <person name="Wassarman D.A."/>
            <person name="Weinstock G.M."/>
            <person name="Weissenbach J."/>
            <person name="Williams S.M."/>
            <person name="Woodage T."/>
            <person name="Worley K.C."/>
            <person name="Wu D."/>
            <person name="Yang S."/>
            <person name="Yao Q.A."/>
            <person name="Ye J."/>
            <person name="Yeh R.-F."/>
            <person name="Zaveri J.S."/>
            <person name="Zhan M."/>
            <person name="Zhang G."/>
            <person name="Zhao Q."/>
            <person name="Zheng L."/>
            <person name="Zheng X.H."/>
            <person name="Zhong F.N."/>
            <person name="Zhong W."/>
            <person name="Zhou X."/>
            <person name="Zhu S.C."/>
            <person name="Zhu X."/>
            <person name="Smith H.O."/>
            <person name="Gibbs R.A."/>
            <person name="Myers E.W."/>
            <person name="Rubin G.M."/>
            <person name="Venter J.C."/>
        </authorList>
    </citation>
    <scope>NUCLEOTIDE SEQUENCE [LARGE SCALE GENOMIC DNA]</scope>
    <source>
        <strain>Berkeley</strain>
    </source>
</reference>
<reference key="2">
    <citation type="journal article" date="2002" name="Genome Biol.">
        <title>Annotation of the Drosophila melanogaster euchromatic genome: a systematic review.</title>
        <authorList>
            <person name="Misra S."/>
            <person name="Crosby M.A."/>
            <person name="Mungall C.J."/>
            <person name="Matthews B.B."/>
            <person name="Campbell K.S."/>
            <person name="Hradecky P."/>
            <person name="Huang Y."/>
            <person name="Kaminker J.S."/>
            <person name="Millburn G.H."/>
            <person name="Prochnik S.E."/>
            <person name="Smith C.D."/>
            <person name="Tupy J.L."/>
            <person name="Whitfield E.J."/>
            <person name="Bayraktaroglu L."/>
            <person name="Berman B.P."/>
            <person name="Bettencourt B.R."/>
            <person name="Celniker S.E."/>
            <person name="de Grey A.D.N.J."/>
            <person name="Drysdale R.A."/>
            <person name="Harris N.L."/>
            <person name="Richter J."/>
            <person name="Russo S."/>
            <person name="Schroeder A.J."/>
            <person name="Shu S.Q."/>
            <person name="Stapleton M."/>
            <person name="Yamada C."/>
            <person name="Ashburner M."/>
            <person name="Gelbart W.M."/>
            <person name="Rubin G.M."/>
            <person name="Lewis S.E."/>
        </authorList>
    </citation>
    <scope>GENOME REANNOTATION</scope>
    <source>
        <strain>Berkeley</strain>
    </source>
</reference>
<reference key="3">
    <citation type="journal article" date="2002" name="Genome Biol.">
        <title>A Drosophila full-length cDNA resource.</title>
        <authorList>
            <person name="Stapleton M."/>
            <person name="Carlson J.W."/>
            <person name="Brokstein P."/>
            <person name="Yu C."/>
            <person name="Champe M."/>
            <person name="George R.A."/>
            <person name="Guarin H."/>
            <person name="Kronmiller B."/>
            <person name="Pacleb J.M."/>
            <person name="Park S."/>
            <person name="Wan K.H."/>
            <person name="Rubin G.M."/>
            <person name="Celniker S.E."/>
        </authorList>
    </citation>
    <scope>NUCLEOTIDE SEQUENCE [LARGE SCALE MRNA]</scope>
    <source>
        <strain>Berkeley</strain>
        <tissue>Embryo</tissue>
    </source>
</reference>
<evidence type="ECO:0000250" key="1"/>
<evidence type="ECO:0000305" key="2"/>
<evidence type="ECO:0000312" key="3">
    <source>
        <dbReference type="FlyBase" id="FBgn0038951"/>
    </source>
</evidence>
<organism>
    <name type="scientific">Drosophila melanogaster</name>
    <name type="common">Fruit fly</name>
    <dbReference type="NCBI Taxonomy" id="7227"/>
    <lineage>
        <taxon>Eukaryota</taxon>
        <taxon>Metazoa</taxon>
        <taxon>Ecdysozoa</taxon>
        <taxon>Arthropoda</taxon>
        <taxon>Hexapoda</taxon>
        <taxon>Insecta</taxon>
        <taxon>Pterygota</taxon>
        <taxon>Neoptera</taxon>
        <taxon>Endopterygota</taxon>
        <taxon>Diptera</taxon>
        <taxon>Brachycera</taxon>
        <taxon>Muscomorpha</taxon>
        <taxon>Ephydroidea</taxon>
        <taxon>Drosophilidae</taxon>
        <taxon>Drosophila</taxon>
        <taxon>Sophophora</taxon>
    </lineage>
</organism>